<reference key="1">
    <citation type="submission" date="2001-06" db="EMBL/GenBank/DDBJ databases">
        <title>Isolation of full-length cDNA clones from macaque brain cDNA libraries.</title>
        <authorList>
            <person name="Osada N."/>
            <person name="Hida M."/>
            <person name="Kusuda J."/>
            <person name="Tanuma R."/>
            <person name="Iseki K."/>
            <person name="Hirai M."/>
            <person name="Terao K."/>
            <person name="Suzuki Y."/>
            <person name="Sugano S."/>
            <person name="Hashimoto K."/>
        </authorList>
    </citation>
    <scope>NUCLEOTIDE SEQUENCE [LARGE SCALE MRNA]</scope>
    <source>
        <tissue>Temporal cortex</tissue>
    </source>
</reference>
<protein>
    <recommendedName>
        <fullName>Transcription factor SOX-14</fullName>
    </recommendedName>
</protein>
<feature type="chain" id="PRO_0000048759" description="Transcription factor SOX-14">
    <location>
        <begin position="1"/>
        <end position="240"/>
    </location>
</feature>
<feature type="DNA-binding region" description="HMG box" evidence="2">
    <location>
        <begin position="8"/>
        <end position="76"/>
    </location>
</feature>
<keyword id="KW-0238">DNA-binding</keyword>
<keyword id="KW-0539">Nucleus</keyword>
<keyword id="KW-1185">Reference proteome</keyword>
<keyword id="KW-0678">Repressor</keyword>
<keyword id="KW-0804">Transcription</keyword>
<keyword id="KW-0805">Transcription regulation</keyword>
<accession>P61259</accession>
<dbReference type="EMBL" id="AB063098">
    <property type="protein sequence ID" value="BAB60804.1"/>
    <property type="molecule type" value="mRNA"/>
</dbReference>
<dbReference type="RefSeq" id="NP_001274648.1">
    <property type="nucleotide sequence ID" value="NM_001287719.1"/>
</dbReference>
<dbReference type="RefSeq" id="XP_045242866.1">
    <property type="nucleotide sequence ID" value="XM_045386931.2"/>
</dbReference>
<dbReference type="SMR" id="P61259"/>
<dbReference type="STRING" id="9541.ENSMFAP00000013535"/>
<dbReference type="Ensembl" id="ENSMFAT00000063486.2">
    <property type="protein sequence ID" value="ENSMFAP00000013535.1"/>
    <property type="gene ID" value="ENSMFAG00000029238.2"/>
</dbReference>
<dbReference type="GeneID" id="102124781"/>
<dbReference type="VEuPathDB" id="HostDB:ENSMFAG00000029238"/>
<dbReference type="eggNOG" id="KOG0527">
    <property type="taxonomic scope" value="Eukaryota"/>
</dbReference>
<dbReference type="GeneTree" id="ENSGT00940000160749"/>
<dbReference type="OMA" id="KMTQEMP"/>
<dbReference type="Proteomes" id="UP000233100">
    <property type="component" value="Chromosome 2"/>
</dbReference>
<dbReference type="GO" id="GO:0005634">
    <property type="term" value="C:nucleus"/>
    <property type="evidence" value="ECO:0007669"/>
    <property type="project" value="UniProtKB-SubCell"/>
</dbReference>
<dbReference type="GO" id="GO:0005667">
    <property type="term" value="C:transcription regulator complex"/>
    <property type="evidence" value="ECO:0007669"/>
    <property type="project" value="Ensembl"/>
</dbReference>
<dbReference type="GO" id="GO:0003682">
    <property type="term" value="F:chromatin binding"/>
    <property type="evidence" value="ECO:0007669"/>
    <property type="project" value="Ensembl"/>
</dbReference>
<dbReference type="GO" id="GO:0001228">
    <property type="term" value="F:DNA-binding transcription activator activity, RNA polymerase II-specific"/>
    <property type="evidence" value="ECO:0007669"/>
    <property type="project" value="TreeGrafter"/>
</dbReference>
<dbReference type="GO" id="GO:0000978">
    <property type="term" value="F:RNA polymerase II cis-regulatory region sequence-specific DNA binding"/>
    <property type="evidence" value="ECO:0007669"/>
    <property type="project" value="TreeGrafter"/>
</dbReference>
<dbReference type="GO" id="GO:0043565">
    <property type="term" value="F:sequence-specific DNA binding"/>
    <property type="evidence" value="ECO:0000250"/>
    <property type="project" value="UniProtKB"/>
</dbReference>
<dbReference type="GO" id="GO:0007420">
    <property type="term" value="P:brain development"/>
    <property type="evidence" value="ECO:0007669"/>
    <property type="project" value="TreeGrafter"/>
</dbReference>
<dbReference type="GO" id="GO:0009649">
    <property type="term" value="P:entrainment of circadian clock"/>
    <property type="evidence" value="ECO:0007669"/>
    <property type="project" value="Ensembl"/>
</dbReference>
<dbReference type="GO" id="GO:0045892">
    <property type="term" value="P:negative regulation of DNA-templated transcription"/>
    <property type="evidence" value="ECO:0000250"/>
    <property type="project" value="UniProtKB"/>
</dbReference>
<dbReference type="GO" id="GO:0000122">
    <property type="term" value="P:negative regulation of transcription by RNA polymerase II"/>
    <property type="evidence" value="ECO:0000250"/>
    <property type="project" value="UniProtKB"/>
</dbReference>
<dbReference type="GO" id="GO:0030182">
    <property type="term" value="P:neuron differentiation"/>
    <property type="evidence" value="ECO:0007669"/>
    <property type="project" value="TreeGrafter"/>
</dbReference>
<dbReference type="GO" id="GO:2001222">
    <property type="term" value="P:regulation of neuron migration"/>
    <property type="evidence" value="ECO:0007669"/>
    <property type="project" value="Ensembl"/>
</dbReference>
<dbReference type="GO" id="GO:0007601">
    <property type="term" value="P:visual perception"/>
    <property type="evidence" value="ECO:0007669"/>
    <property type="project" value="Ensembl"/>
</dbReference>
<dbReference type="CDD" id="cd01388">
    <property type="entry name" value="HMG-box_SoxB"/>
    <property type="match status" value="1"/>
</dbReference>
<dbReference type="FunFam" id="1.10.30.10:FF:000002">
    <property type="entry name" value="transcription factor Sox-2"/>
    <property type="match status" value="1"/>
</dbReference>
<dbReference type="Gene3D" id="1.10.30.10">
    <property type="entry name" value="High mobility group box domain"/>
    <property type="match status" value="1"/>
</dbReference>
<dbReference type="InterPro" id="IPR009071">
    <property type="entry name" value="HMG_box_dom"/>
</dbReference>
<dbReference type="InterPro" id="IPR036910">
    <property type="entry name" value="HMG_box_dom_sf"/>
</dbReference>
<dbReference type="InterPro" id="IPR022097">
    <property type="entry name" value="SOX_fam"/>
</dbReference>
<dbReference type="InterPro" id="IPR050140">
    <property type="entry name" value="SRY-related_HMG-box_TF-like"/>
</dbReference>
<dbReference type="PANTHER" id="PTHR10270">
    <property type="entry name" value="SOX TRANSCRIPTION FACTOR"/>
    <property type="match status" value="1"/>
</dbReference>
<dbReference type="PANTHER" id="PTHR10270:SF107">
    <property type="entry name" value="TRANSCRIPTION FACTOR SOX-14"/>
    <property type="match status" value="1"/>
</dbReference>
<dbReference type="Pfam" id="PF00505">
    <property type="entry name" value="HMG_box"/>
    <property type="match status" value="1"/>
</dbReference>
<dbReference type="Pfam" id="PF12336">
    <property type="entry name" value="SOXp"/>
    <property type="match status" value="1"/>
</dbReference>
<dbReference type="SMART" id="SM00398">
    <property type="entry name" value="HMG"/>
    <property type="match status" value="1"/>
</dbReference>
<dbReference type="SUPFAM" id="SSF47095">
    <property type="entry name" value="HMG-box"/>
    <property type="match status" value="1"/>
</dbReference>
<dbReference type="PROSITE" id="PS50118">
    <property type="entry name" value="HMG_BOX_2"/>
    <property type="match status" value="1"/>
</dbReference>
<comment type="function">
    <text evidence="1">Acts as a negative regulator of transcription.</text>
</comment>
<comment type="subcellular location">
    <subcellularLocation>
        <location evidence="2">Nucleus</location>
    </subcellularLocation>
</comment>
<organism>
    <name type="scientific">Macaca fascicularis</name>
    <name type="common">Crab-eating macaque</name>
    <name type="synonym">Cynomolgus monkey</name>
    <dbReference type="NCBI Taxonomy" id="9541"/>
    <lineage>
        <taxon>Eukaryota</taxon>
        <taxon>Metazoa</taxon>
        <taxon>Chordata</taxon>
        <taxon>Craniata</taxon>
        <taxon>Vertebrata</taxon>
        <taxon>Euteleostomi</taxon>
        <taxon>Mammalia</taxon>
        <taxon>Eutheria</taxon>
        <taxon>Euarchontoglires</taxon>
        <taxon>Primates</taxon>
        <taxon>Haplorrhini</taxon>
        <taxon>Catarrhini</taxon>
        <taxon>Cercopithecidae</taxon>
        <taxon>Cercopithecinae</taxon>
        <taxon>Macaca</taxon>
    </lineage>
</organism>
<name>SOX14_MACFA</name>
<gene>
    <name type="primary">SOX14</name>
    <name type="ORF">QtrA-14282</name>
</gene>
<proteinExistence type="evidence at transcript level"/>
<evidence type="ECO:0000250" key="1"/>
<evidence type="ECO:0000255" key="2">
    <source>
        <dbReference type="PROSITE-ProRule" id="PRU00267"/>
    </source>
</evidence>
<sequence>MSKPSDHIKRPMNAFMVWSRGQRRKMAQENPKMHNSEISKRLGAEWKLLSEAEKRPYIDEAKRLRAQHMKEHPDYKYRPRRKPKNLLKKDRYVFPLPYLGDTDPLKAAGLPVGASDGLLSAPEKARAFLPPASAPYSLLDPAQFSSSAIQKMGEVPHTLATGALPYASTLGYQNGAFGSLSCPSQHTHTHPSPTNPGYVVPCNCTAWSASTLQPPVAYILFPGMTKTGIDPYSSAHATAM</sequence>